<sequence>MSRKGSTPQRNVLPDPKYGSETIARFINMVMKSGKKSVAEKIVYGAMNVIGEKNSNAIELLQKALDNVSPAVEVKSRRVGGATYQVPVEVRASRRMALAMRWLIDSSRKRGENSMPRKLAAELLDASESRGGAIKKREETHRMAEANKAFAHYRW</sequence>
<keyword id="KW-0687">Ribonucleoprotein</keyword>
<keyword id="KW-0689">Ribosomal protein</keyword>
<keyword id="KW-0694">RNA-binding</keyword>
<keyword id="KW-0699">rRNA-binding</keyword>
<keyword id="KW-0820">tRNA-binding</keyword>
<gene>
    <name evidence="1" type="primary">rpsG</name>
    <name type="ordered locus">Xfasm12_2193</name>
</gene>
<name>RS7_XYLFM</name>
<comment type="function">
    <text evidence="1">One of the primary rRNA binding proteins, it binds directly to 16S rRNA where it nucleates assembly of the head domain of the 30S subunit. Is located at the subunit interface close to the decoding center, probably blocks exit of the E-site tRNA.</text>
</comment>
<comment type="subunit">
    <text evidence="1">Part of the 30S ribosomal subunit. Contacts proteins S9 and S11.</text>
</comment>
<comment type="similarity">
    <text evidence="1">Belongs to the universal ribosomal protein uS7 family.</text>
</comment>
<accession>B0U5X4</accession>
<protein>
    <recommendedName>
        <fullName evidence="1">Small ribosomal subunit protein uS7</fullName>
    </recommendedName>
    <alternativeName>
        <fullName evidence="2">30S ribosomal protein S7</fullName>
    </alternativeName>
</protein>
<proteinExistence type="inferred from homology"/>
<reference key="1">
    <citation type="journal article" date="2010" name="J. Bacteriol.">
        <title>Whole genome sequences of two Xylella fastidiosa strains (M12 and M23) causing almond leaf scorch disease in California.</title>
        <authorList>
            <person name="Chen J."/>
            <person name="Xie G."/>
            <person name="Han S."/>
            <person name="Chertkov O."/>
            <person name="Sims D."/>
            <person name="Civerolo E.L."/>
        </authorList>
    </citation>
    <scope>NUCLEOTIDE SEQUENCE [LARGE SCALE GENOMIC DNA]</scope>
    <source>
        <strain>M12</strain>
    </source>
</reference>
<feature type="chain" id="PRO_1000126029" description="Small ribosomal subunit protein uS7">
    <location>
        <begin position="1"/>
        <end position="155"/>
    </location>
</feature>
<evidence type="ECO:0000255" key="1">
    <source>
        <dbReference type="HAMAP-Rule" id="MF_00480"/>
    </source>
</evidence>
<evidence type="ECO:0000305" key="2"/>
<dbReference type="EMBL" id="CP000941">
    <property type="protein sequence ID" value="ACA13046.1"/>
    <property type="molecule type" value="Genomic_DNA"/>
</dbReference>
<dbReference type="RefSeq" id="WP_004084686.1">
    <property type="nucleotide sequence ID" value="NC_010513.1"/>
</dbReference>
<dbReference type="SMR" id="B0U5X4"/>
<dbReference type="KEGG" id="xfm:Xfasm12_2193"/>
<dbReference type="HOGENOM" id="CLU_072226_1_1_6"/>
<dbReference type="GO" id="GO:0015935">
    <property type="term" value="C:small ribosomal subunit"/>
    <property type="evidence" value="ECO:0007669"/>
    <property type="project" value="InterPro"/>
</dbReference>
<dbReference type="GO" id="GO:0019843">
    <property type="term" value="F:rRNA binding"/>
    <property type="evidence" value="ECO:0007669"/>
    <property type="project" value="UniProtKB-UniRule"/>
</dbReference>
<dbReference type="GO" id="GO:0003735">
    <property type="term" value="F:structural constituent of ribosome"/>
    <property type="evidence" value="ECO:0007669"/>
    <property type="project" value="InterPro"/>
</dbReference>
<dbReference type="GO" id="GO:0000049">
    <property type="term" value="F:tRNA binding"/>
    <property type="evidence" value="ECO:0007669"/>
    <property type="project" value="UniProtKB-UniRule"/>
</dbReference>
<dbReference type="GO" id="GO:0006412">
    <property type="term" value="P:translation"/>
    <property type="evidence" value="ECO:0007669"/>
    <property type="project" value="UniProtKB-UniRule"/>
</dbReference>
<dbReference type="CDD" id="cd14869">
    <property type="entry name" value="uS7_Bacteria"/>
    <property type="match status" value="1"/>
</dbReference>
<dbReference type="FunFam" id="1.10.455.10:FF:000001">
    <property type="entry name" value="30S ribosomal protein S7"/>
    <property type="match status" value="1"/>
</dbReference>
<dbReference type="Gene3D" id="1.10.455.10">
    <property type="entry name" value="Ribosomal protein S7 domain"/>
    <property type="match status" value="1"/>
</dbReference>
<dbReference type="HAMAP" id="MF_00480_B">
    <property type="entry name" value="Ribosomal_uS7_B"/>
    <property type="match status" value="1"/>
</dbReference>
<dbReference type="InterPro" id="IPR000235">
    <property type="entry name" value="Ribosomal_uS7"/>
</dbReference>
<dbReference type="InterPro" id="IPR005717">
    <property type="entry name" value="Ribosomal_uS7_bac/org-type"/>
</dbReference>
<dbReference type="InterPro" id="IPR020606">
    <property type="entry name" value="Ribosomal_uS7_CS"/>
</dbReference>
<dbReference type="InterPro" id="IPR023798">
    <property type="entry name" value="Ribosomal_uS7_dom"/>
</dbReference>
<dbReference type="InterPro" id="IPR036823">
    <property type="entry name" value="Ribosomal_uS7_dom_sf"/>
</dbReference>
<dbReference type="NCBIfam" id="TIGR01029">
    <property type="entry name" value="rpsG_bact"/>
    <property type="match status" value="1"/>
</dbReference>
<dbReference type="PANTHER" id="PTHR11205">
    <property type="entry name" value="RIBOSOMAL PROTEIN S7"/>
    <property type="match status" value="1"/>
</dbReference>
<dbReference type="Pfam" id="PF00177">
    <property type="entry name" value="Ribosomal_S7"/>
    <property type="match status" value="1"/>
</dbReference>
<dbReference type="PIRSF" id="PIRSF002122">
    <property type="entry name" value="RPS7p_RPS7a_RPS5e_RPS7o"/>
    <property type="match status" value="1"/>
</dbReference>
<dbReference type="SUPFAM" id="SSF47973">
    <property type="entry name" value="Ribosomal protein S7"/>
    <property type="match status" value="1"/>
</dbReference>
<dbReference type="PROSITE" id="PS00052">
    <property type="entry name" value="RIBOSOMAL_S7"/>
    <property type="match status" value="1"/>
</dbReference>
<organism>
    <name type="scientific">Xylella fastidiosa (strain M12)</name>
    <dbReference type="NCBI Taxonomy" id="405440"/>
    <lineage>
        <taxon>Bacteria</taxon>
        <taxon>Pseudomonadati</taxon>
        <taxon>Pseudomonadota</taxon>
        <taxon>Gammaproteobacteria</taxon>
        <taxon>Lysobacterales</taxon>
        <taxon>Lysobacteraceae</taxon>
        <taxon>Xylella</taxon>
    </lineage>
</organism>